<protein>
    <recommendedName>
        <fullName evidence="1">Photosystem I assembly protein Ycf3</fullName>
    </recommendedName>
</protein>
<keyword id="KW-0150">Chloroplast</keyword>
<keyword id="KW-0472">Membrane</keyword>
<keyword id="KW-0602">Photosynthesis</keyword>
<keyword id="KW-0934">Plastid</keyword>
<keyword id="KW-0677">Repeat</keyword>
<keyword id="KW-0793">Thylakoid</keyword>
<keyword id="KW-0802">TPR repeat</keyword>
<geneLocation type="chloroplast"/>
<gene>
    <name evidence="1" type="primary">ycf3</name>
</gene>
<comment type="function">
    <text evidence="1">Essential for the assembly of the photosystem I (PSI) complex. May act as a chaperone-like factor to guide the assembly of the PSI subunits.</text>
</comment>
<comment type="subcellular location">
    <subcellularLocation>
        <location evidence="1">Plastid</location>
        <location evidence="1">Chloroplast thylakoid membrane</location>
        <topology evidence="1">Peripheral membrane protein</topology>
    </subcellularLocation>
</comment>
<comment type="similarity">
    <text evidence="1">Belongs to the Ycf3 family.</text>
</comment>
<organism>
    <name type="scientific">Liriodendron tulipifera</name>
    <name type="common">Tuliptree</name>
    <name type="synonym">Tulip poplar</name>
    <dbReference type="NCBI Taxonomy" id="3415"/>
    <lineage>
        <taxon>Eukaryota</taxon>
        <taxon>Viridiplantae</taxon>
        <taxon>Streptophyta</taxon>
        <taxon>Embryophyta</taxon>
        <taxon>Tracheophyta</taxon>
        <taxon>Spermatophyta</taxon>
        <taxon>Magnoliopsida</taxon>
        <taxon>Magnoliidae</taxon>
        <taxon>Magnoliales</taxon>
        <taxon>Magnoliaceae</taxon>
        <taxon>Liriodendron</taxon>
    </lineage>
</organism>
<sequence>MPRSRINGNFIDKTSSIVANILLRIIPTTSGEKEAFTYYRDGMSAQSEGNYAEALQNYYEATRPEIDPYDRSYILYNIGLIHTSNGEHTKALEYYFRALERNPFLPQAFNNMAVICHYRGEQAIRQGDSEIAEAWSDQAAEYWKQAIALTPGNYIEAHNWLKITRRFE</sequence>
<proteinExistence type="inferred from homology"/>
<dbReference type="EMBL" id="DQ899947">
    <property type="protein sequence ID" value="ABI32510.1"/>
    <property type="molecule type" value="Genomic_DNA"/>
</dbReference>
<dbReference type="RefSeq" id="YP_740203.1">
    <property type="nucleotide sequence ID" value="NC_008326.1"/>
</dbReference>
<dbReference type="SMR" id="Q0G9L8"/>
<dbReference type="GeneID" id="4266619"/>
<dbReference type="GO" id="GO:0009535">
    <property type="term" value="C:chloroplast thylakoid membrane"/>
    <property type="evidence" value="ECO:0007669"/>
    <property type="project" value="UniProtKB-SubCell"/>
</dbReference>
<dbReference type="GO" id="GO:0015979">
    <property type="term" value="P:photosynthesis"/>
    <property type="evidence" value="ECO:0007669"/>
    <property type="project" value="UniProtKB-UniRule"/>
</dbReference>
<dbReference type="FunFam" id="1.25.40.10:FF:000004">
    <property type="entry name" value="Photosystem I assembly protein Ycf3"/>
    <property type="match status" value="1"/>
</dbReference>
<dbReference type="Gene3D" id="1.25.40.10">
    <property type="entry name" value="Tetratricopeptide repeat domain"/>
    <property type="match status" value="1"/>
</dbReference>
<dbReference type="HAMAP" id="MF_00439">
    <property type="entry name" value="Ycf3"/>
    <property type="match status" value="1"/>
</dbReference>
<dbReference type="InterPro" id="IPR022818">
    <property type="entry name" value="PSI_Ycf3_assembly"/>
</dbReference>
<dbReference type="InterPro" id="IPR011990">
    <property type="entry name" value="TPR-like_helical_dom_sf"/>
</dbReference>
<dbReference type="InterPro" id="IPR019734">
    <property type="entry name" value="TPR_rpt"/>
</dbReference>
<dbReference type="InterPro" id="IPR051685">
    <property type="entry name" value="Ycf3/AcsC/BcsC/TPR_MFPF"/>
</dbReference>
<dbReference type="NCBIfam" id="NF002725">
    <property type="entry name" value="PRK02603.1"/>
    <property type="match status" value="1"/>
</dbReference>
<dbReference type="PANTHER" id="PTHR44943">
    <property type="entry name" value="CELLULOSE SYNTHASE OPERON PROTEIN C"/>
    <property type="match status" value="1"/>
</dbReference>
<dbReference type="PANTHER" id="PTHR44943:SF8">
    <property type="entry name" value="TPR REPEAT-CONTAINING PROTEIN MJ0263"/>
    <property type="match status" value="1"/>
</dbReference>
<dbReference type="Pfam" id="PF00515">
    <property type="entry name" value="TPR_1"/>
    <property type="match status" value="1"/>
</dbReference>
<dbReference type="SMART" id="SM00028">
    <property type="entry name" value="TPR"/>
    <property type="match status" value="3"/>
</dbReference>
<dbReference type="SUPFAM" id="SSF48452">
    <property type="entry name" value="TPR-like"/>
    <property type="match status" value="1"/>
</dbReference>
<dbReference type="PROSITE" id="PS50005">
    <property type="entry name" value="TPR"/>
    <property type="match status" value="3"/>
</dbReference>
<dbReference type="PROSITE" id="PS50293">
    <property type="entry name" value="TPR_REGION"/>
    <property type="match status" value="1"/>
</dbReference>
<evidence type="ECO:0000255" key="1">
    <source>
        <dbReference type="HAMAP-Rule" id="MF_00439"/>
    </source>
</evidence>
<name>YCF3_LIRTU</name>
<reference key="1">
    <citation type="journal article" date="2006" name="BMC Evol. Biol.">
        <title>Complete plastid genome sequences of Drimys, Liriodendron, and Piper: implications for the phylogenetic relationships of magnoliids.</title>
        <authorList>
            <person name="Cai Z."/>
            <person name="Penaflor C."/>
            <person name="Kuehl J.V."/>
            <person name="Leebens-Mack J."/>
            <person name="Carlson J.E."/>
            <person name="dePamphilis C.W."/>
            <person name="Boore J.L."/>
            <person name="Jansen R.K."/>
        </authorList>
    </citation>
    <scope>NUCLEOTIDE SEQUENCE [LARGE SCALE GENOMIC DNA]</scope>
</reference>
<feature type="chain" id="PRO_0000275624" description="Photosystem I assembly protein Ycf3">
    <location>
        <begin position="1"/>
        <end position="168"/>
    </location>
</feature>
<feature type="repeat" description="TPR 1">
    <location>
        <begin position="35"/>
        <end position="68"/>
    </location>
</feature>
<feature type="repeat" description="TPR 2">
    <location>
        <begin position="72"/>
        <end position="105"/>
    </location>
</feature>
<feature type="repeat" description="TPR 3">
    <location>
        <begin position="120"/>
        <end position="153"/>
    </location>
</feature>
<accession>Q0G9L8</accession>